<protein>
    <recommendedName>
        <fullName>Glycine receptor subunit beta</fullName>
    </recommendedName>
    <alternativeName>
        <fullName>Glycine receptor 58 kDa subunit</fullName>
    </alternativeName>
</protein>
<organism>
    <name type="scientific">Rattus norvegicus</name>
    <name type="common">Rat</name>
    <dbReference type="NCBI Taxonomy" id="10116"/>
    <lineage>
        <taxon>Eukaryota</taxon>
        <taxon>Metazoa</taxon>
        <taxon>Chordata</taxon>
        <taxon>Craniata</taxon>
        <taxon>Vertebrata</taxon>
        <taxon>Euteleostomi</taxon>
        <taxon>Mammalia</taxon>
        <taxon>Eutheria</taxon>
        <taxon>Euarchontoglires</taxon>
        <taxon>Glires</taxon>
        <taxon>Rodentia</taxon>
        <taxon>Myomorpha</taxon>
        <taxon>Muroidea</taxon>
        <taxon>Muridae</taxon>
        <taxon>Murinae</taxon>
        <taxon>Rattus</taxon>
    </lineage>
</organism>
<sequence length="496" mass="55927">MKFSLAVSFFILMSLLFEDACSKEKSSKKGKGKKKQYLCPSQQSAEDLARVPPNSTSNILNRLLVSYDPRIRPNFKGIPVDVVVNIFINSFGSIQETTMDYRVNIFLRQKWNDPRLKLPSDFRGSDALTVDPTMYKCLWKPDLFFANEKSANFHDVTQENILLFIFRDGDVLVSMRLSITLSCPLDLTLFPMDTQRCKMQLESFGYTTDDLRFIWQSGDPVQLEKIALPQFDIKKEDIEYGNCTKYYKGTGYYTCVEVIFTLRRQVGFYMMGVYAPTLLIVVLSWLSFWINPDASAARVPLGIFSVLSLASECTTLAAELPKVSYVKALDVWLIACLLFGFASLVEYAVVQVMLNNPKRVEAEKARIAKAEQADGKGGNAAKKNTVNGTGTPVHISTLQVGETRCKKVCTSKSDLRSNDFSIVGSLPRDFELSNYDCYGKPIEVNNGLGKPQAKNKKPPPAKPVIPTAAKRIDLYARALFPFCFLFFNVIYWSIYL</sequence>
<proteinExistence type="evidence at protein level"/>
<dbReference type="EMBL" id="AJ310839">
    <property type="protein sequence ID" value="CAC35983.1"/>
    <property type="molecule type" value="mRNA"/>
</dbReference>
<dbReference type="PIR" id="JH0165">
    <property type="entry name" value="JH0165"/>
</dbReference>
<dbReference type="RefSeq" id="NP_445748.1">
    <property type="nucleotide sequence ID" value="NM_053296.2"/>
</dbReference>
<dbReference type="RefSeq" id="XP_006232568.1">
    <property type="nucleotide sequence ID" value="XM_006232506.2"/>
</dbReference>
<dbReference type="RefSeq" id="XP_063137429.1">
    <property type="nucleotide sequence ID" value="XM_063281359.1"/>
</dbReference>
<dbReference type="PDB" id="1T3E">
    <property type="method" value="X-ray"/>
    <property type="resolution" value="3.25 A"/>
    <property type="chains" value="P=378-426"/>
</dbReference>
<dbReference type="PDB" id="2FTS">
    <property type="method" value="X-ray"/>
    <property type="resolution" value="2.41 A"/>
    <property type="chains" value="P=420-432"/>
</dbReference>
<dbReference type="PDB" id="4PD1">
    <property type="method" value="X-ray"/>
    <property type="resolution" value="1.98 A"/>
    <property type="chains" value="C=419-433"/>
</dbReference>
<dbReference type="PDBsum" id="1T3E"/>
<dbReference type="PDBsum" id="2FTS"/>
<dbReference type="PDBsum" id="4PD1"/>
<dbReference type="SMR" id="P20781"/>
<dbReference type="BioGRID" id="247490">
    <property type="interactions" value="6"/>
</dbReference>
<dbReference type="CORUM" id="P20781"/>
<dbReference type="FunCoup" id="P20781">
    <property type="interactions" value="1132"/>
</dbReference>
<dbReference type="IntAct" id="P20781">
    <property type="interactions" value="1"/>
</dbReference>
<dbReference type="STRING" id="10116.ENSRNOP00000014170"/>
<dbReference type="ChEMBL" id="CHEMBL3392921"/>
<dbReference type="GuidetoPHARMACOLOGY" id="427"/>
<dbReference type="GlyCosmos" id="P20781">
    <property type="glycosylation" value="2 sites, No reported glycans"/>
</dbReference>
<dbReference type="GlyGen" id="P20781">
    <property type="glycosylation" value="2 sites"/>
</dbReference>
<dbReference type="iPTMnet" id="P20781"/>
<dbReference type="PhosphoSitePlus" id="P20781"/>
<dbReference type="PaxDb" id="10116-ENSRNOP00000014170"/>
<dbReference type="Ensembl" id="ENSRNOT00000014170.5">
    <property type="protein sequence ID" value="ENSRNOP00000014170.1"/>
    <property type="gene ID" value="ENSRNOG00000010199.6"/>
</dbReference>
<dbReference type="GeneID" id="25456"/>
<dbReference type="KEGG" id="rno:25456"/>
<dbReference type="UCSC" id="RGD:2706">
    <property type="organism name" value="rat"/>
</dbReference>
<dbReference type="AGR" id="RGD:2706"/>
<dbReference type="CTD" id="2743"/>
<dbReference type="RGD" id="2706">
    <property type="gene designation" value="Glrb"/>
</dbReference>
<dbReference type="eggNOG" id="KOG3644">
    <property type="taxonomic scope" value="Eukaryota"/>
</dbReference>
<dbReference type="GeneTree" id="ENSGT00940000156344"/>
<dbReference type="HOGENOM" id="CLU_010920_1_4_1"/>
<dbReference type="InParanoid" id="P20781"/>
<dbReference type="OMA" id="KFFWGIL"/>
<dbReference type="OrthoDB" id="407674at2759"/>
<dbReference type="PhylomeDB" id="P20781"/>
<dbReference type="TreeFam" id="TF315453"/>
<dbReference type="Reactome" id="R-RNO-112314">
    <property type="pathway name" value="Neurotransmitter receptors and postsynaptic signal transmission"/>
</dbReference>
<dbReference type="CD-CODE" id="A7E9CBB4">
    <property type="entry name" value="Postsynaptic density"/>
</dbReference>
<dbReference type="EvolutionaryTrace" id="P20781"/>
<dbReference type="PRO" id="PR:P20781"/>
<dbReference type="Proteomes" id="UP000002494">
    <property type="component" value="Chromosome 2"/>
</dbReference>
<dbReference type="Bgee" id="ENSRNOG00000010199">
    <property type="expression patterns" value="Expressed in cerebellum and 6 other cell types or tissues"/>
</dbReference>
<dbReference type="GO" id="GO:0005737">
    <property type="term" value="C:cytoplasm"/>
    <property type="evidence" value="ECO:0007669"/>
    <property type="project" value="UniProtKB-SubCell"/>
</dbReference>
<dbReference type="GO" id="GO:0030425">
    <property type="term" value="C:dendrite"/>
    <property type="evidence" value="ECO:0000266"/>
    <property type="project" value="RGD"/>
</dbReference>
<dbReference type="GO" id="GO:0098982">
    <property type="term" value="C:GABA-ergic synapse"/>
    <property type="evidence" value="ECO:0000266"/>
    <property type="project" value="RGD"/>
</dbReference>
<dbReference type="GO" id="GO:0016935">
    <property type="term" value="C:glycine-gated chloride channel complex"/>
    <property type="evidence" value="ECO:0000250"/>
    <property type="project" value="UniProtKB"/>
</dbReference>
<dbReference type="GO" id="GO:0098690">
    <property type="term" value="C:glycinergic synapse"/>
    <property type="evidence" value="ECO:0000314"/>
    <property type="project" value="SynGO"/>
</dbReference>
<dbReference type="GO" id="GO:0016020">
    <property type="term" value="C:membrane"/>
    <property type="evidence" value="ECO:0000266"/>
    <property type="project" value="RGD"/>
</dbReference>
<dbReference type="GO" id="GO:0043204">
    <property type="term" value="C:perikaryon"/>
    <property type="evidence" value="ECO:0007669"/>
    <property type="project" value="UniProtKB-SubCell"/>
</dbReference>
<dbReference type="GO" id="GO:0005886">
    <property type="term" value="C:plasma membrane"/>
    <property type="evidence" value="ECO:0000250"/>
    <property type="project" value="UniProtKB"/>
</dbReference>
<dbReference type="GO" id="GO:0045211">
    <property type="term" value="C:postsynaptic membrane"/>
    <property type="evidence" value="ECO:0000304"/>
    <property type="project" value="RGD"/>
</dbReference>
<dbReference type="GO" id="GO:0099572">
    <property type="term" value="C:postsynaptic specialization"/>
    <property type="evidence" value="ECO:0000314"/>
    <property type="project" value="SynGO"/>
</dbReference>
<dbReference type="GO" id="GO:0016934">
    <property type="term" value="F:extracellularly glycine-gated chloride channel activity"/>
    <property type="evidence" value="ECO:0000266"/>
    <property type="project" value="RGD"/>
</dbReference>
<dbReference type="GO" id="GO:0016933">
    <property type="term" value="F:extracellularly glycine-gated ion channel activity"/>
    <property type="evidence" value="ECO:0000314"/>
    <property type="project" value="RGD"/>
</dbReference>
<dbReference type="GO" id="GO:0016594">
    <property type="term" value="F:glycine binding"/>
    <property type="evidence" value="ECO:0000314"/>
    <property type="project" value="RGD"/>
</dbReference>
<dbReference type="GO" id="GO:0044877">
    <property type="term" value="F:protein-containing complex binding"/>
    <property type="evidence" value="ECO:0000314"/>
    <property type="project" value="RGD"/>
</dbReference>
<dbReference type="GO" id="GO:0004888">
    <property type="term" value="F:transmembrane signaling receptor activity"/>
    <property type="evidence" value="ECO:0007669"/>
    <property type="project" value="InterPro"/>
</dbReference>
<dbReference type="GO" id="GO:1904315">
    <property type="term" value="F:transmitter-gated monoatomic ion channel activity involved in regulation of postsynaptic membrane potential"/>
    <property type="evidence" value="ECO:0000266"/>
    <property type="project" value="RGD"/>
</dbReference>
<dbReference type="GO" id="GO:0007340">
    <property type="term" value="P:acrosome reaction"/>
    <property type="evidence" value="ECO:0000266"/>
    <property type="project" value="RGD"/>
</dbReference>
<dbReference type="GO" id="GO:0007628">
    <property type="term" value="P:adult walking behavior"/>
    <property type="evidence" value="ECO:0000266"/>
    <property type="project" value="RGD"/>
</dbReference>
<dbReference type="GO" id="GO:0007268">
    <property type="term" value="P:chemical synaptic transmission"/>
    <property type="evidence" value="ECO:0000250"/>
    <property type="project" value="UniProtKB"/>
</dbReference>
<dbReference type="GO" id="GO:1902476">
    <property type="term" value="P:chloride transmembrane transport"/>
    <property type="evidence" value="ECO:0000250"/>
    <property type="project" value="UniProtKB"/>
</dbReference>
<dbReference type="GO" id="GO:0097112">
    <property type="term" value="P:gamma-aminobutyric acid receptor clustering"/>
    <property type="evidence" value="ECO:0000266"/>
    <property type="project" value="RGD"/>
</dbReference>
<dbReference type="GO" id="GO:0006811">
    <property type="term" value="P:monoatomic ion transport"/>
    <property type="evidence" value="ECO:0000250"/>
    <property type="project" value="UniProtKB"/>
</dbReference>
<dbReference type="GO" id="GO:0007399">
    <property type="term" value="P:nervous system development"/>
    <property type="evidence" value="ECO:0000250"/>
    <property type="project" value="UniProtKB"/>
</dbReference>
<dbReference type="GO" id="GO:0050905">
    <property type="term" value="P:neuromuscular process"/>
    <property type="evidence" value="ECO:0000266"/>
    <property type="project" value="RGD"/>
</dbReference>
<dbReference type="GO" id="GO:0007218">
    <property type="term" value="P:neuropeptide signaling pathway"/>
    <property type="evidence" value="ECO:0000250"/>
    <property type="project" value="UniProtKB"/>
</dbReference>
<dbReference type="GO" id="GO:0042391">
    <property type="term" value="P:regulation of membrane potential"/>
    <property type="evidence" value="ECO:0000266"/>
    <property type="project" value="RGD"/>
</dbReference>
<dbReference type="GO" id="GO:0060013">
    <property type="term" value="P:righting reflex"/>
    <property type="evidence" value="ECO:0000266"/>
    <property type="project" value="RGD"/>
</dbReference>
<dbReference type="GO" id="GO:0001964">
    <property type="term" value="P:startle response"/>
    <property type="evidence" value="ECO:0000250"/>
    <property type="project" value="UniProtKB"/>
</dbReference>
<dbReference type="GO" id="GO:0060012">
    <property type="term" value="P:synaptic transmission, glycinergic"/>
    <property type="evidence" value="ECO:0000314"/>
    <property type="project" value="RGD"/>
</dbReference>
<dbReference type="GO" id="GO:0007601">
    <property type="term" value="P:visual perception"/>
    <property type="evidence" value="ECO:0000266"/>
    <property type="project" value="RGD"/>
</dbReference>
<dbReference type="CDD" id="cd19010">
    <property type="entry name" value="LGIC_ECD_GlyR_beta"/>
    <property type="match status" value="1"/>
</dbReference>
<dbReference type="CDD" id="cd19061">
    <property type="entry name" value="LGIC_TM_GlyR_beta"/>
    <property type="match status" value="1"/>
</dbReference>
<dbReference type="FunFam" id="1.20.58.390:FF:000070">
    <property type="entry name" value="Glycine receptor beta"/>
    <property type="match status" value="1"/>
</dbReference>
<dbReference type="FunFam" id="2.70.170.10:FF:000014">
    <property type="entry name" value="Glycine receptor subunit beta"/>
    <property type="match status" value="1"/>
</dbReference>
<dbReference type="Gene3D" id="2.70.170.10">
    <property type="entry name" value="Neurotransmitter-gated ion-channel ligand-binding domain"/>
    <property type="match status" value="1"/>
</dbReference>
<dbReference type="Gene3D" id="1.20.58.390">
    <property type="entry name" value="Neurotransmitter-gated ion-channel transmembrane domain"/>
    <property type="match status" value="1"/>
</dbReference>
<dbReference type="InterPro" id="IPR008060">
    <property type="entry name" value="Glycine_rcpt_B"/>
</dbReference>
<dbReference type="InterPro" id="IPR047031">
    <property type="entry name" value="GlyR_beta__ECD"/>
</dbReference>
<dbReference type="InterPro" id="IPR047029">
    <property type="entry name" value="GlyR_beta_TM"/>
</dbReference>
<dbReference type="InterPro" id="IPR006202">
    <property type="entry name" value="Neur_chan_lig-bd"/>
</dbReference>
<dbReference type="InterPro" id="IPR036734">
    <property type="entry name" value="Neur_chan_lig-bd_sf"/>
</dbReference>
<dbReference type="InterPro" id="IPR006201">
    <property type="entry name" value="Neur_channel"/>
</dbReference>
<dbReference type="InterPro" id="IPR036719">
    <property type="entry name" value="Neuro-gated_channel_TM_sf"/>
</dbReference>
<dbReference type="InterPro" id="IPR038050">
    <property type="entry name" value="Neuro_actylchol_rec"/>
</dbReference>
<dbReference type="InterPro" id="IPR006029">
    <property type="entry name" value="Neurotrans-gated_channel_TM"/>
</dbReference>
<dbReference type="InterPro" id="IPR018000">
    <property type="entry name" value="Neurotransmitter_ion_chnl_CS"/>
</dbReference>
<dbReference type="NCBIfam" id="TIGR00860">
    <property type="entry name" value="LIC"/>
    <property type="match status" value="1"/>
</dbReference>
<dbReference type="PANTHER" id="PTHR18945">
    <property type="entry name" value="NEUROTRANSMITTER GATED ION CHANNEL"/>
    <property type="match status" value="1"/>
</dbReference>
<dbReference type="Pfam" id="PF02931">
    <property type="entry name" value="Neur_chan_LBD"/>
    <property type="match status" value="1"/>
</dbReference>
<dbReference type="Pfam" id="PF02932">
    <property type="entry name" value="Neur_chan_memb"/>
    <property type="match status" value="1"/>
</dbReference>
<dbReference type="PRINTS" id="PR01677">
    <property type="entry name" value="GLYRBETA"/>
</dbReference>
<dbReference type="PRINTS" id="PR00252">
    <property type="entry name" value="NRIONCHANNEL"/>
</dbReference>
<dbReference type="SUPFAM" id="SSF90112">
    <property type="entry name" value="Neurotransmitter-gated ion-channel transmembrane pore"/>
    <property type="match status" value="1"/>
</dbReference>
<dbReference type="SUPFAM" id="SSF63712">
    <property type="entry name" value="Nicotinic receptor ligand binding domain-like"/>
    <property type="match status" value="1"/>
</dbReference>
<dbReference type="PROSITE" id="PS00236">
    <property type="entry name" value="NEUROTR_ION_CHANNEL"/>
    <property type="match status" value="1"/>
</dbReference>
<accession>P20781</accession>
<keyword id="KW-0002">3D-structure</keyword>
<keyword id="KW-1003">Cell membrane</keyword>
<keyword id="KW-0966">Cell projection</keyword>
<keyword id="KW-0868">Chloride</keyword>
<keyword id="KW-0869">Chloride channel</keyword>
<keyword id="KW-0963">Cytoplasm</keyword>
<keyword id="KW-0903">Direct protein sequencing</keyword>
<keyword id="KW-1015">Disulfide bond</keyword>
<keyword id="KW-0325">Glycoprotein</keyword>
<keyword id="KW-0407">Ion channel</keyword>
<keyword id="KW-0406">Ion transport</keyword>
<keyword id="KW-1071">Ligand-gated ion channel</keyword>
<keyword id="KW-0472">Membrane</keyword>
<keyword id="KW-0597">Phosphoprotein</keyword>
<keyword id="KW-0628">Postsynaptic cell membrane</keyword>
<keyword id="KW-0675">Receptor</keyword>
<keyword id="KW-1185">Reference proteome</keyword>
<keyword id="KW-0732">Signal</keyword>
<keyword id="KW-0770">Synapse</keyword>
<keyword id="KW-0812">Transmembrane</keyword>
<keyword id="KW-1133">Transmembrane helix</keyword>
<keyword id="KW-0813">Transport</keyword>
<evidence type="ECO:0000250" key="1">
    <source>
        <dbReference type="UniProtKB" id="P23415"/>
    </source>
</evidence>
<evidence type="ECO:0000250" key="2">
    <source>
        <dbReference type="UniProtKB" id="P48167"/>
    </source>
</evidence>
<evidence type="ECO:0000250" key="3">
    <source>
        <dbReference type="UniProtKB" id="P48168"/>
    </source>
</evidence>
<evidence type="ECO:0000255" key="4"/>
<evidence type="ECO:0000269" key="5">
    <source>
    </source>
</evidence>
<evidence type="ECO:0000269" key="6">
    <source>
    </source>
</evidence>
<evidence type="ECO:0000269" key="7">
    <source>
    </source>
</evidence>
<evidence type="ECO:0000269" key="8">
    <source>
    </source>
</evidence>
<evidence type="ECO:0000269" key="9">
    <source>
    </source>
</evidence>
<evidence type="ECO:0000269" key="10">
    <source>
    </source>
</evidence>
<evidence type="ECO:0000269" key="11">
    <source>
    </source>
</evidence>
<evidence type="ECO:0000305" key="12"/>
<evidence type="ECO:0000305" key="13">
    <source>
    </source>
</evidence>
<evidence type="ECO:0007744" key="14">
    <source>
    </source>
</evidence>
<evidence type="ECO:0007829" key="15">
    <source>
        <dbReference type="PDB" id="2FTS"/>
    </source>
</evidence>
<gene>
    <name type="primary">Glrb</name>
</gene>
<name>GLRB_RAT</name>
<reference key="1">
    <citation type="journal article" date="1990" name="Neuron">
        <title>Cloning and expression of the 58 kd beta subunit of the inhibitory glycine receptor.</title>
        <authorList>
            <person name="Grenningloh G."/>
            <person name="Pribilla I."/>
            <person name="Prior P."/>
            <person name="Multhaup G."/>
            <person name="Beyreuther K."/>
            <person name="Taleb O."/>
            <person name="Betz H."/>
        </authorList>
    </citation>
    <scope>NUCLEOTIDE SEQUENCE [MRNA]</scope>
    <scope>PARTIAL PROTEIN SEQUENCE</scope>
    <scope>TISSUE SPECIFICITY</scope>
</reference>
<reference key="2">
    <citation type="journal article" date="2004" name="J. Neurosci.">
        <title>Single-channel behavior of heteromeric alpha1beta glycine receptors: an attempt to detect a conformational change before the channel opens.</title>
        <authorList>
            <person name="Burzomato V."/>
            <person name="Beato M."/>
            <person name="Groot Kormelink P.J."/>
            <person name="Colquhoun D."/>
            <person name="Sivilotti L.G."/>
        </authorList>
    </citation>
    <scope>NUCLEOTIDE SEQUENCE [MRNA]</scope>
    <scope>FUNCTION</scope>
    <scope>TRANSPORTER ACTIVITY</scope>
    <scope>ACTIVITY REGULATION</scope>
    <scope>INTERACTION WITH GLRA1</scope>
    <scope>SUBCELLULAR LOCATION</scope>
    <scope>SUBUNIT</scope>
    <source>
        <strain>Sprague-Dawley</strain>
        <tissue>Brain</tissue>
    </source>
</reference>
<reference key="3">
    <citation type="journal article" date="1995" name="Mol. Cell. Neurosci.">
        <title>Targeting of glycine receptor subunits to gephyrin-rich domains in transfected human embryonic kidney cells.</title>
        <authorList>
            <person name="Kirsch J."/>
            <person name="Kuhse J."/>
            <person name="Betz H."/>
        </authorList>
    </citation>
    <scope>SUBCELLULAR LOCATION</scope>
    <scope>INTERACTION WITH GPHN; GLRA1; GLRA2 AND GLRA3</scope>
</reference>
<reference key="4">
    <citation type="journal article" date="2003" name="Eur. Biophys. J.">
        <title>Kinetic analysis of recombinant mammalian alpha(1) and alpha(1)beta glycine receptor channels.</title>
        <authorList>
            <person name="Mohammadi B."/>
            <person name="Krampfl K."/>
            <person name="Cetinkaya C."/>
            <person name="Moschref H."/>
            <person name="Grosskreutz J."/>
            <person name="Dengler R."/>
            <person name="Bufler J."/>
        </authorList>
    </citation>
    <scope>INTERACTION WITH GLRA1</scope>
    <scope>FUNCTION</scope>
    <scope>ACTIVITY REGULATION</scope>
    <scope>SUBCELLULAR LOCATION</scope>
</reference>
<reference key="5">
    <citation type="journal article" date="2012" name="J. Comp. Neurol.">
        <title>Distribution of the glycine receptor beta-subunit in the mouse CNS as revealed by a novel monoclonal antibody.</title>
        <authorList>
            <person name="Weltzien F."/>
            <person name="Puller C."/>
            <person name="O'Sullivan G.A."/>
            <person name="Paarmann I."/>
            <person name="Betz H."/>
        </authorList>
    </citation>
    <scope>TISSUE SPECIFICITY</scope>
    <scope>SUBCELLULAR LOCATION</scope>
</reference>
<reference key="6">
    <citation type="journal article" date="2012" name="Nat. Commun.">
        <title>Quantitative maps of protein phosphorylation sites across 14 different rat organs and tissues.</title>
        <authorList>
            <person name="Lundby A."/>
            <person name="Secher A."/>
            <person name="Lage K."/>
            <person name="Nordsborg N.B."/>
            <person name="Dmytriyev A."/>
            <person name="Lundby C."/>
            <person name="Olsen J.V."/>
        </authorList>
    </citation>
    <scope>PHOSPHORYLATION [LARGE SCALE ANALYSIS] AT THR-391</scope>
    <scope>IDENTIFICATION BY MASS SPECTROMETRY [LARGE SCALE ANALYSIS]</scope>
</reference>
<reference key="7">
    <citation type="journal article" date="2004" name="EMBO J.">
        <title>Structural basis of dynamic glycine receptor clustering by gephyrin.</title>
        <authorList>
            <person name="Sola M."/>
            <person name="Bavro V.N."/>
            <person name="Timmins J."/>
            <person name="Franz T."/>
            <person name="Ricard-Blum S."/>
            <person name="Schoehn G."/>
            <person name="Ruigrok R.W.H."/>
            <person name="Paarmann I."/>
            <person name="Saiyed T."/>
            <person name="O'Sullivan G.A."/>
            <person name="Schmitt B."/>
            <person name="Betz H."/>
            <person name="Weissenhorn W."/>
        </authorList>
    </citation>
    <scope>X-RAY CRYSTALLOGRAPHY (3.25 ANGSTROMS) OF 378-426 IN COMPLEX WITH GPHN</scope>
</reference>
<reference key="8">
    <citation type="journal article" date="2006" name="EMBO J.">
        <title>Deciphering the structural framework of glycine receptor anchoring by gephyrin.</title>
        <authorList>
            <person name="Kim E.Y."/>
            <person name="Schrader N."/>
            <person name="Smolinsky B."/>
            <person name="Bedet C."/>
            <person name="Vannier C."/>
            <person name="Schwarz G."/>
            <person name="Schindelin H."/>
        </authorList>
    </citation>
    <scope>X-RAY CRYSTALLOGRAPHY (2.41 ANGSTROMS) OF 420-432 IN COMPLEX WITH GPHN</scope>
</reference>
<feature type="signal peptide">
    <location>
        <begin position="1"/>
        <end position="22"/>
    </location>
</feature>
<feature type="chain" id="PRO_0000000425" description="Glycine receptor subunit beta">
    <location>
        <begin position="23"/>
        <end position="496"/>
    </location>
</feature>
<feature type="topological domain" description="Extracellular" evidence="2">
    <location>
        <begin position="23"/>
        <end position="268"/>
    </location>
</feature>
<feature type="transmembrane region" description="Helical; Name=1" evidence="2">
    <location>
        <begin position="269"/>
        <end position="289"/>
    </location>
</feature>
<feature type="topological domain" description="Cytoplasmic" evidence="2">
    <location>
        <begin position="290"/>
        <end position="294"/>
    </location>
</feature>
<feature type="transmembrane region" description="Helical; Name=2" evidence="2">
    <location>
        <begin position="295"/>
        <end position="315"/>
    </location>
</feature>
<feature type="topological domain" description="Extracellular" evidence="2">
    <location>
        <begin position="316"/>
        <end position="327"/>
    </location>
</feature>
<feature type="transmembrane region" description="Helical; Name=3" evidence="2">
    <location>
        <begin position="328"/>
        <end position="349"/>
    </location>
</feature>
<feature type="topological domain" description="Cytoplasmic" evidence="2">
    <location>
        <begin position="350"/>
        <end position="471"/>
    </location>
</feature>
<feature type="transmembrane region" description="Helical; Name=4" evidence="2">
    <location>
        <begin position="472"/>
        <end position="495"/>
    </location>
</feature>
<feature type="topological domain" description="Extracellular" evidence="2">
    <location>
        <position position="496"/>
    </location>
</feature>
<feature type="binding site" evidence="2">
    <location>
        <position position="108"/>
    </location>
    <ligand>
        <name>glycine</name>
        <dbReference type="ChEBI" id="CHEBI:57305"/>
        <label>1</label>
        <note>agonist; ligand shared with an adjacent GLRA1 subunit or GLRA2 subunit</note>
    </ligand>
</feature>
<feature type="binding site" evidence="2">
    <location>
        <position position="174"/>
    </location>
    <ligand>
        <name>glycine</name>
        <dbReference type="ChEBI" id="CHEBI:57305"/>
        <label>1</label>
        <note>agonist; ligand shared with an adjacent GLRA1 subunit or GLRA2 subunit</note>
    </ligand>
</feature>
<feature type="binding site" evidence="2">
    <location>
        <position position="250"/>
    </location>
    <ligand>
        <name>glycine</name>
        <dbReference type="ChEBI" id="CHEBI:57305"/>
        <label>2</label>
        <note>agonist; ligand shared with an adjacent GLRA2 subunit</note>
    </ligand>
</feature>
<feature type="site" description="Important for obstruction of the ion pore in the closed conformation" evidence="1">
    <location>
        <position position="307"/>
    </location>
</feature>
<feature type="modified residue" description="Phosphothreonine" evidence="14">
    <location>
        <position position="391"/>
    </location>
</feature>
<feature type="glycosylation site" description="N-linked (GlcNAc...) asparagine" evidence="4">
    <location>
        <position position="54"/>
    </location>
</feature>
<feature type="glycosylation site" description="N-linked (GlcNAc...) asparagine" evidence="4">
    <location>
        <position position="242"/>
    </location>
</feature>
<feature type="disulfide bond" evidence="1">
    <location>
        <begin position="183"/>
        <end position="197"/>
    </location>
</feature>
<feature type="disulfide bond" evidence="1">
    <location>
        <begin position="243"/>
        <end position="255"/>
    </location>
</feature>
<feature type="helix" evidence="15">
    <location>
        <begin position="429"/>
        <end position="431"/>
    </location>
</feature>
<comment type="function">
    <text evidence="2 3 7">Subunit of heteromeric glycine-gated chloride channels (PubMed:15574743). Plays an important role in the down-regulation of neuronal excitability. Contributes to the generation of inhibitory postsynaptic currents (By similarity).</text>
</comment>
<comment type="catalytic activity">
    <reaction evidence="7">
        <text>chloride(in) = chloride(out)</text>
        <dbReference type="Rhea" id="RHEA:29823"/>
        <dbReference type="ChEBI" id="CHEBI:17996"/>
    </reaction>
</comment>
<comment type="activity regulation">
    <text evidence="2 5 7">Channel opening is triggered by extracellular glycine (PubMed:14551753, PubMed:15574743). Heteropentameric channels composed of GLRB and GLRA1 are activated by lower glycine levels than homopentameric GLRA1 (By similarity).</text>
</comment>
<comment type="subunit">
    <text evidence="2 5 6 7 8 11">Forms heteropentamers with glycin receptor alpha subunits (PubMed:14551753, PubMed:15574743, PubMed:8581315). Heteropentamers with GLRA1 can be composed of two GLRA1 and three GLRB subunits, or three GLRA1 and two GLRB subunits, or four GLRA1 subunits and one GLRB subunit (By similarity). Forms heteropentamers with GLRA2 (PubMed:8581315). Functional GLRB-GLRA2 heteropentamers contain four GLRA2 subunits and one GLRB subunit, although alternative subunit composition cannot be excluded (By similarity). Forms a heteropentamer with GLRA3 (PubMed:8581315). Interacts with GPHN (PubMed:15201864, PubMed:16511563, PubMed:8581315).</text>
</comment>
<comment type="subcellular location">
    <subcellularLocation>
        <location evidence="13">Postsynaptic cell membrane</location>
        <topology evidence="1">Multi-pass membrane protein</topology>
    </subcellularLocation>
    <subcellularLocation>
        <location evidence="5 7 10 11">Cell membrane</location>
        <topology evidence="1">Multi-pass membrane protein</topology>
    </subcellularLocation>
    <subcellularLocation>
        <location evidence="10">Synapse</location>
    </subcellularLocation>
    <subcellularLocation>
        <location evidence="10">Perikaryon</location>
    </subcellularLocation>
    <subcellularLocation>
        <location evidence="10">Cell projection</location>
        <location evidence="10">Dendrite</location>
    </subcellularLocation>
    <subcellularLocation>
        <location evidence="11">Cytoplasm</location>
    </subcellularLocation>
    <text evidence="11">Retained in the cytoplasm upon heterologous expression by itself. Coexpression with GPHN promotes expression at the cell membrane. Coexpression with GLRA1, GLRA2 or GLRA3 promotes expression at the cell membrane.</text>
</comment>
<comment type="tissue specificity">
    <text evidence="9 10">Detected in spinal cord and brain stem (at protein level) (PubMed:22592841). Detected in spinal cord, cerebellum and brain cortex (PubMed:2163264).</text>
</comment>
<comment type="similarity">
    <text evidence="12">Belongs to the ligand-gated ion channel (TC 1.A.9) family. Glycine receptor (TC 1.A.9.3) subfamily. GLRB sub-subfamily.</text>
</comment>